<organism>
    <name type="scientific">Tolumonas auensis (strain DSM 9187 / NBRC 110442 / TA 4)</name>
    <dbReference type="NCBI Taxonomy" id="595494"/>
    <lineage>
        <taxon>Bacteria</taxon>
        <taxon>Pseudomonadati</taxon>
        <taxon>Pseudomonadota</taxon>
        <taxon>Gammaproteobacteria</taxon>
        <taxon>Aeromonadales</taxon>
        <taxon>Aeromonadaceae</taxon>
        <taxon>Tolumonas</taxon>
    </lineage>
</organism>
<dbReference type="EMBL" id="CP001616">
    <property type="protein sequence ID" value="ACQ94321.1"/>
    <property type="molecule type" value="Genomic_DNA"/>
</dbReference>
<dbReference type="RefSeq" id="WP_015879770.1">
    <property type="nucleotide sequence ID" value="NC_012691.1"/>
</dbReference>
<dbReference type="SMR" id="C4LBP7"/>
<dbReference type="STRING" id="595494.Tola_2728"/>
<dbReference type="KEGG" id="tau:Tola_2728"/>
<dbReference type="eggNOG" id="COG1551">
    <property type="taxonomic scope" value="Bacteria"/>
</dbReference>
<dbReference type="HOGENOM" id="CLU_164837_2_1_6"/>
<dbReference type="OrthoDB" id="9809061at2"/>
<dbReference type="Proteomes" id="UP000009073">
    <property type="component" value="Chromosome"/>
</dbReference>
<dbReference type="GO" id="GO:0005829">
    <property type="term" value="C:cytosol"/>
    <property type="evidence" value="ECO:0007669"/>
    <property type="project" value="TreeGrafter"/>
</dbReference>
<dbReference type="GO" id="GO:0048027">
    <property type="term" value="F:mRNA 5'-UTR binding"/>
    <property type="evidence" value="ECO:0007669"/>
    <property type="project" value="UniProtKB-UniRule"/>
</dbReference>
<dbReference type="GO" id="GO:0006402">
    <property type="term" value="P:mRNA catabolic process"/>
    <property type="evidence" value="ECO:0007669"/>
    <property type="project" value="InterPro"/>
</dbReference>
<dbReference type="GO" id="GO:0045947">
    <property type="term" value="P:negative regulation of translational initiation"/>
    <property type="evidence" value="ECO:0007669"/>
    <property type="project" value="UniProtKB-UniRule"/>
</dbReference>
<dbReference type="GO" id="GO:0045948">
    <property type="term" value="P:positive regulation of translational initiation"/>
    <property type="evidence" value="ECO:0007669"/>
    <property type="project" value="UniProtKB-UniRule"/>
</dbReference>
<dbReference type="GO" id="GO:0006109">
    <property type="term" value="P:regulation of carbohydrate metabolic process"/>
    <property type="evidence" value="ECO:0007669"/>
    <property type="project" value="UniProtKB-UniRule"/>
</dbReference>
<dbReference type="FunFam" id="2.60.40.4380:FF:000001">
    <property type="entry name" value="Translational regulator CsrA"/>
    <property type="match status" value="1"/>
</dbReference>
<dbReference type="Gene3D" id="2.60.40.4380">
    <property type="entry name" value="Translational regulator CsrA"/>
    <property type="match status" value="1"/>
</dbReference>
<dbReference type="HAMAP" id="MF_00167">
    <property type="entry name" value="CsrA"/>
    <property type="match status" value="1"/>
</dbReference>
<dbReference type="InterPro" id="IPR003751">
    <property type="entry name" value="CsrA"/>
</dbReference>
<dbReference type="InterPro" id="IPR036107">
    <property type="entry name" value="CsrA_sf"/>
</dbReference>
<dbReference type="NCBIfam" id="TIGR00202">
    <property type="entry name" value="csrA"/>
    <property type="match status" value="1"/>
</dbReference>
<dbReference type="NCBIfam" id="NF002469">
    <property type="entry name" value="PRK01712.1"/>
    <property type="match status" value="1"/>
</dbReference>
<dbReference type="PANTHER" id="PTHR34984">
    <property type="entry name" value="CARBON STORAGE REGULATOR"/>
    <property type="match status" value="1"/>
</dbReference>
<dbReference type="PANTHER" id="PTHR34984:SF1">
    <property type="entry name" value="CARBON STORAGE REGULATOR"/>
    <property type="match status" value="1"/>
</dbReference>
<dbReference type="Pfam" id="PF02599">
    <property type="entry name" value="CsrA"/>
    <property type="match status" value="1"/>
</dbReference>
<dbReference type="SUPFAM" id="SSF117130">
    <property type="entry name" value="CsrA-like"/>
    <property type="match status" value="1"/>
</dbReference>
<keyword id="KW-0010">Activator</keyword>
<keyword id="KW-0963">Cytoplasm</keyword>
<keyword id="KW-1185">Reference proteome</keyword>
<keyword id="KW-0678">Repressor</keyword>
<keyword id="KW-0694">RNA-binding</keyword>
<keyword id="KW-0810">Translation regulation</keyword>
<sequence>MLILTRRVGETLMIGDEVTVTVLGVKGNQVRIGVNAPKDVSVHREEIYMRIQSEKDNENGPQSY</sequence>
<accession>C4LBP7</accession>
<comment type="function">
    <text evidence="1">A key translational regulator that binds mRNA to regulate translation initiation and/or mRNA stability. Mediates global changes in gene expression, shifting from rapid growth to stress survival by linking envelope stress, the stringent response and the catabolite repression systems. Usually binds in the 5'-UTR; binding at or near the Shine-Dalgarno sequence prevents ribosome-binding, repressing translation, binding elsewhere in the 5'-UTR can activate translation and/or stabilize the mRNA. Its function is antagonized by small RNA(s).</text>
</comment>
<comment type="subunit">
    <text evidence="1">Homodimer; the beta-strands of each monomer intercalate to form a hydrophobic core, while the alpha-helices form wings that extend away from the core.</text>
</comment>
<comment type="subcellular location">
    <subcellularLocation>
        <location evidence="1">Cytoplasm</location>
    </subcellularLocation>
</comment>
<comment type="similarity">
    <text evidence="1">Belongs to the CsrA/RsmA family.</text>
</comment>
<proteinExistence type="inferred from homology"/>
<reference key="1">
    <citation type="submission" date="2009-05" db="EMBL/GenBank/DDBJ databases">
        <title>Complete sequence of Tolumonas auensis DSM 9187.</title>
        <authorList>
            <consortium name="US DOE Joint Genome Institute"/>
            <person name="Lucas S."/>
            <person name="Copeland A."/>
            <person name="Lapidus A."/>
            <person name="Glavina del Rio T."/>
            <person name="Tice H."/>
            <person name="Bruce D."/>
            <person name="Goodwin L."/>
            <person name="Pitluck S."/>
            <person name="Chertkov O."/>
            <person name="Brettin T."/>
            <person name="Detter J.C."/>
            <person name="Han C."/>
            <person name="Larimer F."/>
            <person name="Land M."/>
            <person name="Hauser L."/>
            <person name="Kyrpides N."/>
            <person name="Mikhailova N."/>
            <person name="Spring S."/>
            <person name="Beller H."/>
        </authorList>
    </citation>
    <scope>NUCLEOTIDE SEQUENCE [LARGE SCALE GENOMIC DNA]</scope>
    <source>
        <strain>DSM 9187 / NBRC 110442 / TA 4</strain>
    </source>
</reference>
<feature type="chain" id="PRO_1000203647" description="Translational regulator CsrA">
    <location>
        <begin position="1"/>
        <end position="64"/>
    </location>
</feature>
<name>CSRA_TOLAT</name>
<gene>
    <name evidence="1" type="primary">csrA</name>
    <name type="ordered locus">Tola_2728</name>
</gene>
<protein>
    <recommendedName>
        <fullName evidence="1">Translational regulator CsrA</fullName>
    </recommendedName>
    <alternativeName>
        <fullName evidence="1">Carbon storage regulator</fullName>
    </alternativeName>
</protein>
<evidence type="ECO:0000255" key="1">
    <source>
        <dbReference type="HAMAP-Rule" id="MF_00167"/>
    </source>
</evidence>